<name>BETA_PROMH</name>
<keyword id="KW-0274">FAD</keyword>
<keyword id="KW-0285">Flavoprotein</keyword>
<keyword id="KW-0520">NAD</keyword>
<keyword id="KW-0560">Oxidoreductase</keyword>
<keyword id="KW-1185">Reference proteome</keyword>
<sequence length="555" mass="61595">MVYDYIIIGAGSAGNVLATRLTEDPDVTVLLLEAGGPDYRFDFRTQMPAALAYPLQGRRYNWAYETEPEPHMNNRRMECGRGKGLGGSSLINGMCYIRGNAMDFDEWAKLPGLEDWNYLNCLPYFRKAETRDIGANDYHGDSGPVSVTTPKKGNNVLFHAMVEAGVQAGYPRTDDLNGYQQEGFGPMDRTVTPHGRRASTARGYLDQAKSRKNLTIETHATTDIIEFEGKKASGVRYFKGTNTTPQHVKARKEILLCAGAIASPQILQRSGVGPEDVLNEFDISPVHVLPGVGQNLQDHLEMYLQYECKQPVSLYPALKWYNQPKIGAEWLFKGTGIGASNQFEAGGFIRSSEKFAWPNIQFHFLPVAINYNGSNAVEVHGFQAHVGSMRSPSRGRIKITSRDPHQHPSILFNYMSTEQDWQEFRAAIRITREIMAQPALDPYRGEEISPGKDIQTDEQLDAFVRERAETAFHPCGSCKMGNDEMAVVDGAGRVHGIESLRVIDASIMPNIITGNLNATTIMIAEKMADKIKGIKPLPASQADYYVAGHSPARRN</sequence>
<feature type="chain" id="PRO_1000133334" description="Oxygen-dependent choline dehydrogenase">
    <location>
        <begin position="1"/>
        <end position="555"/>
    </location>
</feature>
<feature type="active site" description="Proton acceptor" evidence="1">
    <location>
        <position position="473"/>
    </location>
</feature>
<feature type="binding site" evidence="1">
    <location>
        <begin position="4"/>
        <end position="33"/>
    </location>
    <ligand>
        <name>FAD</name>
        <dbReference type="ChEBI" id="CHEBI:57692"/>
    </ligand>
</feature>
<comment type="function">
    <text evidence="1">Involved in the biosynthesis of the osmoprotectant glycine betaine. Catalyzes the oxidation of choline to betaine aldehyde and betaine aldehyde to glycine betaine at the same rate.</text>
</comment>
<comment type="catalytic activity">
    <reaction evidence="1">
        <text>choline + A = betaine aldehyde + AH2</text>
        <dbReference type="Rhea" id="RHEA:17433"/>
        <dbReference type="ChEBI" id="CHEBI:13193"/>
        <dbReference type="ChEBI" id="CHEBI:15354"/>
        <dbReference type="ChEBI" id="CHEBI:15710"/>
        <dbReference type="ChEBI" id="CHEBI:17499"/>
        <dbReference type="EC" id="1.1.99.1"/>
    </reaction>
</comment>
<comment type="catalytic activity">
    <reaction evidence="1">
        <text>betaine aldehyde + NAD(+) + H2O = glycine betaine + NADH + 2 H(+)</text>
        <dbReference type="Rhea" id="RHEA:15305"/>
        <dbReference type="ChEBI" id="CHEBI:15377"/>
        <dbReference type="ChEBI" id="CHEBI:15378"/>
        <dbReference type="ChEBI" id="CHEBI:15710"/>
        <dbReference type="ChEBI" id="CHEBI:17750"/>
        <dbReference type="ChEBI" id="CHEBI:57540"/>
        <dbReference type="ChEBI" id="CHEBI:57945"/>
        <dbReference type="EC" id="1.2.1.8"/>
    </reaction>
</comment>
<comment type="cofactor">
    <cofactor evidence="1">
        <name>FAD</name>
        <dbReference type="ChEBI" id="CHEBI:57692"/>
    </cofactor>
</comment>
<comment type="pathway">
    <text evidence="1">Amine and polyamine biosynthesis; betaine biosynthesis via choline pathway; betaine aldehyde from choline (cytochrome c reductase route): step 1/1.</text>
</comment>
<comment type="similarity">
    <text evidence="1">Belongs to the GMC oxidoreductase family.</text>
</comment>
<organism>
    <name type="scientific">Proteus mirabilis (strain HI4320)</name>
    <dbReference type="NCBI Taxonomy" id="529507"/>
    <lineage>
        <taxon>Bacteria</taxon>
        <taxon>Pseudomonadati</taxon>
        <taxon>Pseudomonadota</taxon>
        <taxon>Gammaproteobacteria</taxon>
        <taxon>Enterobacterales</taxon>
        <taxon>Morganellaceae</taxon>
        <taxon>Proteus</taxon>
    </lineage>
</organism>
<proteinExistence type="inferred from homology"/>
<dbReference type="EC" id="1.1.99.1" evidence="1"/>
<dbReference type="EC" id="1.2.1.8" evidence="1"/>
<dbReference type="EMBL" id="AM942759">
    <property type="protein sequence ID" value="CAR43062.1"/>
    <property type="molecule type" value="Genomic_DNA"/>
</dbReference>
<dbReference type="RefSeq" id="WP_004250946.1">
    <property type="nucleotide sequence ID" value="NC_010554.1"/>
</dbReference>
<dbReference type="SMR" id="B4EX94"/>
<dbReference type="EnsemblBacteria" id="CAR43062">
    <property type="protein sequence ID" value="CAR43062"/>
    <property type="gene ID" value="PMI1459"/>
</dbReference>
<dbReference type="GeneID" id="6802577"/>
<dbReference type="KEGG" id="pmr:PMI1459"/>
<dbReference type="eggNOG" id="COG2303">
    <property type="taxonomic scope" value="Bacteria"/>
</dbReference>
<dbReference type="HOGENOM" id="CLU_002865_7_1_6"/>
<dbReference type="UniPathway" id="UPA00529">
    <property type="reaction ID" value="UER00385"/>
</dbReference>
<dbReference type="Proteomes" id="UP000008319">
    <property type="component" value="Chromosome"/>
</dbReference>
<dbReference type="GO" id="GO:0016020">
    <property type="term" value="C:membrane"/>
    <property type="evidence" value="ECO:0007669"/>
    <property type="project" value="TreeGrafter"/>
</dbReference>
<dbReference type="GO" id="GO:0008802">
    <property type="term" value="F:betaine-aldehyde dehydrogenase (NAD+) activity"/>
    <property type="evidence" value="ECO:0007669"/>
    <property type="project" value="UniProtKB-EC"/>
</dbReference>
<dbReference type="GO" id="GO:0008812">
    <property type="term" value="F:choline dehydrogenase activity"/>
    <property type="evidence" value="ECO:0007669"/>
    <property type="project" value="UniProtKB-UniRule"/>
</dbReference>
<dbReference type="GO" id="GO:0050660">
    <property type="term" value="F:flavin adenine dinucleotide binding"/>
    <property type="evidence" value="ECO:0007669"/>
    <property type="project" value="InterPro"/>
</dbReference>
<dbReference type="GO" id="GO:0019285">
    <property type="term" value="P:glycine betaine biosynthetic process from choline"/>
    <property type="evidence" value="ECO:0007669"/>
    <property type="project" value="UniProtKB-UniRule"/>
</dbReference>
<dbReference type="Gene3D" id="3.50.50.60">
    <property type="entry name" value="FAD/NAD(P)-binding domain"/>
    <property type="match status" value="1"/>
</dbReference>
<dbReference type="Gene3D" id="3.30.560.10">
    <property type="entry name" value="Glucose Oxidase, domain 3"/>
    <property type="match status" value="1"/>
</dbReference>
<dbReference type="HAMAP" id="MF_00750">
    <property type="entry name" value="Choline_dehydrogen"/>
    <property type="match status" value="1"/>
</dbReference>
<dbReference type="InterPro" id="IPR011533">
    <property type="entry name" value="BetA"/>
</dbReference>
<dbReference type="InterPro" id="IPR036188">
    <property type="entry name" value="FAD/NAD-bd_sf"/>
</dbReference>
<dbReference type="InterPro" id="IPR012132">
    <property type="entry name" value="GMC_OxRdtase"/>
</dbReference>
<dbReference type="InterPro" id="IPR000172">
    <property type="entry name" value="GMC_OxRdtase_N"/>
</dbReference>
<dbReference type="InterPro" id="IPR007867">
    <property type="entry name" value="GMC_OxRtase_C"/>
</dbReference>
<dbReference type="NCBIfam" id="TIGR01810">
    <property type="entry name" value="betA"/>
    <property type="match status" value="1"/>
</dbReference>
<dbReference type="NCBIfam" id="NF002550">
    <property type="entry name" value="PRK02106.1"/>
    <property type="match status" value="1"/>
</dbReference>
<dbReference type="PANTHER" id="PTHR11552:SF147">
    <property type="entry name" value="CHOLINE DEHYDROGENASE, MITOCHONDRIAL"/>
    <property type="match status" value="1"/>
</dbReference>
<dbReference type="PANTHER" id="PTHR11552">
    <property type="entry name" value="GLUCOSE-METHANOL-CHOLINE GMC OXIDOREDUCTASE"/>
    <property type="match status" value="1"/>
</dbReference>
<dbReference type="Pfam" id="PF05199">
    <property type="entry name" value="GMC_oxred_C"/>
    <property type="match status" value="1"/>
</dbReference>
<dbReference type="Pfam" id="PF00732">
    <property type="entry name" value="GMC_oxred_N"/>
    <property type="match status" value="1"/>
</dbReference>
<dbReference type="PIRSF" id="PIRSF000137">
    <property type="entry name" value="Alcohol_oxidase"/>
    <property type="match status" value="1"/>
</dbReference>
<dbReference type="SUPFAM" id="SSF54373">
    <property type="entry name" value="FAD-linked reductases, C-terminal domain"/>
    <property type="match status" value="1"/>
</dbReference>
<dbReference type="SUPFAM" id="SSF51905">
    <property type="entry name" value="FAD/NAD(P)-binding domain"/>
    <property type="match status" value="1"/>
</dbReference>
<dbReference type="PROSITE" id="PS00623">
    <property type="entry name" value="GMC_OXRED_1"/>
    <property type="match status" value="1"/>
</dbReference>
<dbReference type="PROSITE" id="PS00624">
    <property type="entry name" value="GMC_OXRED_2"/>
    <property type="match status" value="1"/>
</dbReference>
<reference key="1">
    <citation type="journal article" date="2008" name="J. Bacteriol.">
        <title>Complete genome sequence of uropathogenic Proteus mirabilis, a master of both adherence and motility.</title>
        <authorList>
            <person name="Pearson M.M."/>
            <person name="Sebaihia M."/>
            <person name="Churcher C."/>
            <person name="Quail M.A."/>
            <person name="Seshasayee A.S."/>
            <person name="Luscombe N.M."/>
            <person name="Abdellah Z."/>
            <person name="Arrosmith C."/>
            <person name="Atkin B."/>
            <person name="Chillingworth T."/>
            <person name="Hauser H."/>
            <person name="Jagels K."/>
            <person name="Moule S."/>
            <person name="Mungall K."/>
            <person name="Norbertczak H."/>
            <person name="Rabbinowitsch E."/>
            <person name="Walker D."/>
            <person name="Whithead S."/>
            <person name="Thomson N.R."/>
            <person name="Rather P.N."/>
            <person name="Parkhill J."/>
            <person name="Mobley H.L.T."/>
        </authorList>
    </citation>
    <scope>NUCLEOTIDE SEQUENCE [LARGE SCALE GENOMIC DNA]</scope>
    <source>
        <strain>HI4320</strain>
    </source>
</reference>
<gene>
    <name evidence="1" type="primary">betA</name>
    <name type="ordered locus">PMI1459</name>
</gene>
<accession>B4EX94</accession>
<evidence type="ECO:0000255" key="1">
    <source>
        <dbReference type="HAMAP-Rule" id="MF_00750"/>
    </source>
</evidence>
<protein>
    <recommendedName>
        <fullName evidence="1">Oxygen-dependent choline dehydrogenase</fullName>
        <shortName evidence="1">CDH</shortName>
        <shortName evidence="1">CHD</shortName>
        <ecNumber evidence="1">1.1.99.1</ecNumber>
    </recommendedName>
    <alternativeName>
        <fullName evidence="1">Betaine aldehyde dehydrogenase</fullName>
        <shortName evidence="1">BADH</shortName>
        <ecNumber evidence="1">1.2.1.8</ecNumber>
    </alternativeName>
</protein>